<accession>A6L686</accession>
<keyword id="KW-0067">ATP-binding</keyword>
<keyword id="KW-0315">Glutamine amidotransferase</keyword>
<keyword id="KW-0332">GMP biosynthesis</keyword>
<keyword id="KW-0436">Ligase</keyword>
<keyword id="KW-0547">Nucleotide-binding</keyword>
<keyword id="KW-0658">Purine biosynthesis</keyword>
<evidence type="ECO:0000255" key="1">
    <source>
        <dbReference type="HAMAP-Rule" id="MF_00344"/>
    </source>
</evidence>
<organism>
    <name type="scientific">Phocaeicola vulgatus (strain ATCC 8482 / DSM 1447 / JCM 5826 / CCUG 4940 / NBRC 14291 / NCTC 11154)</name>
    <name type="common">Bacteroides vulgatus</name>
    <dbReference type="NCBI Taxonomy" id="435590"/>
    <lineage>
        <taxon>Bacteria</taxon>
        <taxon>Pseudomonadati</taxon>
        <taxon>Bacteroidota</taxon>
        <taxon>Bacteroidia</taxon>
        <taxon>Bacteroidales</taxon>
        <taxon>Bacteroidaceae</taxon>
        <taxon>Phocaeicola</taxon>
    </lineage>
</organism>
<feature type="chain" id="PRO_1000120219" description="GMP synthase [glutamine-hydrolyzing]">
    <location>
        <begin position="1"/>
        <end position="517"/>
    </location>
</feature>
<feature type="domain" description="Glutamine amidotransferase type-1" evidence="1">
    <location>
        <begin position="4"/>
        <end position="193"/>
    </location>
</feature>
<feature type="domain" description="GMPS ATP-PPase" evidence="1">
    <location>
        <begin position="194"/>
        <end position="382"/>
    </location>
</feature>
<feature type="active site" description="Nucleophile" evidence="1">
    <location>
        <position position="79"/>
    </location>
</feature>
<feature type="active site" evidence="1">
    <location>
        <position position="167"/>
    </location>
</feature>
<feature type="active site" evidence="1">
    <location>
        <position position="169"/>
    </location>
</feature>
<feature type="binding site" evidence="1">
    <location>
        <begin position="221"/>
        <end position="227"/>
    </location>
    <ligand>
        <name>ATP</name>
        <dbReference type="ChEBI" id="CHEBI:30616"/>
    </ligand>
</feature>
<gene>
    <name evidence="1" type="primary">guaA</name>
    <name type="ordered locus">BVU_3587</name>
</gene>
<protein>
    <recommendedName>
        <fullName evidence="1">GMP synthase [glutamine-hydrolyzing]</fullName>
        <ecNumber evidence="1">6.3.5.2</ecNumber>
    </recommendedName>
    <alternativeName>
        <fullName evidence="1">GMP synthetase</fullName>
    </alternativeName>
    <alternativeName>
        <fullName evidence="1">Glutamine amidotransferase</fullName>
    </alternativeName>
</protein>
<comment type="function">
    <text evidence="1">Catalyzes the synthesis of GMP from XMP.</text>
</comment>
<comment type="catalytic activity">
    <reaction evidence="1">
        <text>XMP + L-glutamine + ATP + H2O = GMP + L-glutamate + AMP + diphosphate + 2 H(+)</text>
        <dbReference type="Rhea" id="RHEA:11680"/>
        <dbReference type="ChEBI" id="CHEBI:15377"/>
        <dbReference type="ChEBI" id="CHEBI:15378"/>
        <dbReference type="ChEBI" id="CHEBI:29985"/>
        <dbReference type="ChEBI" id="CHEBI:30616"/>
        <dbReference type="ChEBI" id="CHEBI:33019"/>
        <dbReference type="ChEBI" id="CHEBI:57464"/>
        <dbReference type="ChEBI" id="CHEBI:58115"/>
        <dbReference type="ChEBI" id="CHEBI:58359"/>
        <dbReference type="ChEBI" id="CHEBI:456215"/>
        <dbReference type="EC" id="6.3.5.2"/>
    </reaction>
</comment>
<comment type="pathway">
    <text evidence="1">Purine metabolism; GMP biosynthesis; GMP from XMP (L-Gln route): step 1/1.</text>
</comment>
<comment type="subunit">
    <text evidence="1">Homodimer.</text>
</comment>
<name>GUAA_PHOV8</name>
<proteinExistence type="inferred from homology"/>
<reference key="1">
    <citation type="journal article" date="2007" name="PLoS Biol.">
        <title>Evolution of symbiotic bacteria in the distal human intestine.</title>
        <authorList>
            <person name="Xu J."/>
            <person name="Mahowald M.A."/>
            <person name="Ley R.E."/>
            <person name="Lozupone C.A."/>
            <person name="Hamady M."/>
            <person name="Martens E.C."/>
            <person name="Henrissat B."/>
            <person name="Coutinho P.M."/>
            <person name="Minx P."/>
            <person name="Latreille P."/>
            <person name="Cordum H."/>
            <person name="Van Brunt A."/>
            <person name="Kim K."/>
            <person name="Fulton R.S."/>
            <person name="Fulton L.A."/>
            <person name="Clifton S.W."/>
            <person name="Wilson R.K."/>
            <person name="Knight R.D."/>
            <person name="Gordon J.I."/>
        </authorList>
    </citation>
    <scope>NUCLEOTIDE SEQUENCE [LARGE SCALE GENOMIC DNA]</scope>
    <source>
        <strain>ATCC 8482 / DSM 1447 / JCM 5826 / CCUG 4940 / NBRC 14291 / NCTC 11154</strain>
    </source>
</reference>
<sequence>MQEKIIILDFGSQTTQLIARRVRELNTYCEIVPYNKFPHNDPSIIGVILSGSPFSVYDESAFKVDLSDIRGKYPILGICYGAQFMSYTNGGKVEPAGTREYGRAHLSTFDQENPLLKNVREHSQVWMSHGDTITAIPENFKIIASTDKVAIAAYQIKEEKVWGVQFHPEVFHSEDGTQLLKNFVVDICGGKQDWSAASFIETTVAELKAQLGNDKVVLGLSGGVDSSVAAVLLNKAIGKNLTCIFVDHGMLRKNEFKNVLHDYECLGLNVIGVDASQKFFSELAGVEEPEKKRKIIGKGFIDVFDEEAHKIKDVKWLAQGTIYPDCIESLSITGTVIKSHHNVGGLPEKMNLKLCEPLRLLFKDEVRHVGRELGMPEHLITRHPFPGPGLAVRILGDITPEKVRILQDADDIYIQGLRDWKVKDSDGNETSLYHQVWQAGVILLPVQSVGVMGDERTYERAVALRAVTSTDAMTADWAHLPYEFMAKVSNDIINKVKGVNRVCYDISSKPPATIEWE</sequence>
<dbReference type="EC" id="6.3.5.2" evidence="1"/>
<dbReference type="EMBL" id="CP000139">
    <property type="protein sequence ID" value="ABR41200.1"/>
    <property type="molecule type" value="Genomic_DNA"/>
</dbReference>
<dbReference type="RefSeq" id="WP_005839286.1">
    <property type="nucleotide sequence ID" value="NZ_JANSWM010000066.1"/>
</dbReference>
<dbReference type="SMR" id="A6L686"/>
<dbReference type="STRING" id="435590.BVU_3587"/>
<dbReference type="PaxDb" id="435590-BVU_3587"/>
<dbReference type="DNASU" id="5304547"/>
<dbReference type="GeneID" id="5304547"/>
<dbReference type="KEGG" id="bvu:BVU_3587"/>
<dbReference type="eggNOG" id="COG0518">
    <property type="taxonomic scope" value="Bacteria"/>
</dbReference>
<dbReference type="eggNOG" id="COG0519">
    <property type="taxonomic scope" value="Bacteria"/>
</dbReference>
<dbReference type="HOGENOM" id="CLU_014340_0_5_10"/>
<dbReference type="BioCyc" id="BVUL435590:G1G59-3723-MONOMER"/>
<dbReference type="UniPathway" id="UPA00189">
    <property type="reaction ID" value="UER00296"/>
</dbReference>
<dbReference type="Proteomes" id="UP000002861">
    <property type="component" value="Chromosome"/>
</dbReference>
<dbReference type="GO" id="GO:0005829">
    <property type="term" value="C:cytosol"/>
    <property type="evidence" value="ECO:0007669"/>
    <property type="project" value="TreeGrafter"/>
</dbReference>
<dbReference type="GO" id="GO:0005524">
    <property type="term" value="F:ATP binding"/>
    <property type="evidence" value="ECO:0007669"/>
    <property type="project" value="UniProtKB-UniRule"/>
</dbReference>
<dbReference type="GO" id="GO:0003921">
    <property type="term" value="F:GMP synthase activity"/>
    <property type="evidence" value="ECO:0007669"/>
    <property type="project" value="InterPro"/>
</dbReference>
<dbReference type="CDD" id="cd01742">
    <property type="entry name" value="GATase1_GMP_Synthase"/>
    <property type="match status" value="1"/>
</dbReference>
<dbReference type="CDD" id="cd01997">
    <property type="entry name" value="GMP_synthase_C"/>
    <property type="match status" value="1"/>
</dbReference>
<dbReference type="FunFam" id="3.30.300.10:FF:000002">
    <property type="entry name" value="GMP synthase [glutamine-hydrolyzing]"/>
    <property type="match status" value="1"/>
</dbReference>
<dbReference type="FunFam" id="3.40.50.620:FF:000001">
    <property type="entry name" value="GMP synthase [glutamine-hydrolyzing]"/>
    <property type="match status" value="1"/>
</dbReference>
<dbReference type="FunFam" id="3.40.50.880:FF:000001">
    <property type="entry name" value="GMP synthase [glutamine-hydrolyzing]"/>
    <property type="match status" value="1"/>
</dbReference>
<dbReference type="Gene3D" id="3.30.300.10">
    <property type="match status" value="1"/>
</dbReference>
<dbReference type="Gene3D" id="3.40.50.880">
    <property type="match status" value="1"/>
</dbReference>
<dbReference type="Gene3D" id="3.40.50.620">
    <property type="entry name" value="HUPs"/>
    <property type="match status" value="1"/>
</dbReference>
<dbReference type="HAMAP" id="MF_00344">
    <property type="entry name" value="GMP_synthase"/>
    <property type="match status" value="1"/>
</dbReference>
<dbReference type="InterPro" id="IPR029062">
    <property type="entry name" value="Class_I_gatase-like"/>
</dbReference>
<dbReference type="InterPro" id="IPR017926">
    <property type="entry name" value="GATASE"/>
</dbReference>
<dbReference type="InterPro" id="IPR001674">
    <property type="entry name" value="GMP_synth_C"/>
</dbReference>
<dbReference type="InterPro" id="IPR004739">
    <property type="entry name" value="GMP_synth_GATase"/>
</dbReference>
<dbReference type="InterPro" id="IPR022955">
    <property type="entry name" value="GMP_synthase"/>
</dbReference>
<dbReference type="InterPro" id="IPR025777">
    <property type="entry name" value="GMPS_ATP_PPase_dom"/>
</dbReference>
<dbReference type="InterPro" id="IPR022310">
    <property type="entry name" value="NAD/GMP_synthase"/>
</dbReference>
<dbReference type="InterPro" id="IPR014729">
    <property type="entry name" value="Rossmann-like_a/b/a_fold"/>
</dbReference>
<dbReference type="NCBIfam" id="TIGR00884">
    <property type="entry name" value="guaA_Cterm"/>
    <property type="match status" value="1"/>
</dbReference>
<dbReference type="NCBIfam" id="TIGR00888">
    <property type="entry name" value="guaA_Nterm"/>
    <property type="match status" value="1"/>
</dbReference>
<dbReference type="NCBIfam" id="NF000848">
    <property type="entry name" value="PRK00074.1"/>
    <property type="match status" value="1"/>
</dbReference>
<dbReference type="PANTHER" id="PTHR11922:SF2">
    <property type="entry name" value="GMP SYNTHASE [GLUTAMINE-HYDROLYZING]"/>
    <property type="match status" value="1"/>
</dbReference>
<dbReference type="PANTHER" id="PTHR11922">
    <property type="entry name" value="GMP SYNTHASE-RELATED"/>
    <property type="match status" value="1"/>
</dbReference>
<dbReference type="Pfam" id="PF00117">
    <property type="entry name" value="GATase"/>
    <property type="match status" value="1"/>
</dbReference>
<dbReference type="Pfam" id="PF00958">
    <property type="entry name" value="GMP_synt_C"/>
    <property type="match status" value="1"/>
</dbReference>
<dbReference type="Pfam" id="PF02540">
    <property type="entry name" value="NAD_synthase"/>
    <property type="match status" value="1"/>
</dbReference>
<dbReference type="PRINTS" id="PR00096">
    <property type="entry name" value="GATASE"/>
</dbReference>
<dbReference type="SUPFAM" id="SSF52402">
    <property type="entry name" value="Adenine nucleotide alpha hydrolases-like"/>
    <property type="match status" value="1"/>
</dbReference>
<dbReference type="SUPFAM" id="SSF52317">
    <property type="entry name" value="Class I glutamine amidotransferase-like"/>
    <property type="match status" value="1"/>
</dbReference>
<dbReference type="SUPFAM" id="SSF54810">
    <property type="entry name" value="GMP synthetase C-terminal dimerisation domain"/>
    <property type="match status" value="1"/>
</dbReference>
<dbReference type="PROSITE" id="PS51273">
    <property type="entry name" value="GATASE_TYPE_1"/>
    <property type="match status" value="1"/>
</dbReference>
<dbReference type="PROSITE" id="PS51553">
    <property type="entry name" value="GMPS_ATP_PPASE"/>
    <property type="match status" value="1"/>
</dbReference>